<sequence>MHDKILILDFGSQVTQLIARRVREAHVYCEIHPNDVSDDFVREFAPKGVILSGSHASTYEDHQLRAPQAVWDLGVPVLGICYGMQTMAVQLGGKVEWSDHREFGYAEVRAHGRTRLLDGIQDFATPEGHGMLKVWMSHGDKVGEMPPGFALMASTPSCPIAGMADEARGYYAVQFHPEVTHTVQGRKLLERFVLDIAGAKPDWIMRDHIEEAVARIREQVGDEEVILGLSGGVDSSVAAALIHRAIGDQLTCVFVDHGLLRLNEGKMVLDMFEGRLHAKVVHVDASEQFLGHLAGVADPEHKRKIIGREFVEVFQAEAKKLTNAKWLAQGTIYPDVIESGGAKTKKATTIKSHHNVGGLPETLGLKLLEPLRDLFKDEVRELGVALGLPAEMVYRHPFPGPGLGVRILGEVKRDYAELLRRADAIFIEELRGTLATEQDAAAGLCEPSQVGKSWYDLTSQAFAVFLPVKSVGVMGDGRTYDYVAALRAVQTTDFMTAHWAHLPYALLGRASNRIINEVRGINRVVYDVSGKPPATIEWE</sequence>
<evidence type="ECO:0000255" key="1">
    <source>
        <dbReference type="HAMAP-Rule" id="MF_00344"/>
    </source>
</evidence>
<accession>A3MKQ7</accession>
<dbReference type="EC" id="6.3.5.2" evidence="1"/>
<dbReference type="EMBL" id="CP000548">
    <property type="protein sequence ID" value="ABO04136.1"/>
    <property type="molecule type" value="Genomic_DNA"/>
</dbReference>
<dbReference type="RefSeq" id="WP_004193192.1">
    <property type="nucleotide sequence ID" value="NZ_CP007802.1"/>
</dbReference>
<dbReference type="SMR" id="A3MKQ7"/>
<dbReference type="GeneID" id="93060667"/>
<dbReference type="KEGG" id="bmaz:BM44_1830"/>
<dbReference type="KEGG" id="bmn:BMA10247_1292"/>
<dbReference type="PATRIC" id="fig|320389.8.peg.2048"/>
<dbReference type="UniPathway" id="UPA00189">
    <property type="reaction ID" value="UER00296"/>
</dbReference>
<dbReference type="GO" id="GO:0005829">
    <property type="term" value="C:cytosol"/>
    <property type="evidence" value="ECO:0007669"/>
    <property type="project" value="TreeGrafter"/>
</dbReference>
<dbReference type="GO" id="GO:0005524">
    <property type="term" value="F:ATP binding"/>
    <property type="evidence" value="ECO:0007669"/>
    <property type="project" value="UniProtKB-UniRule"/>
</dbReference>
<dbReference type="GO" id="GO:0003921">
    <property type="term" value="F:GMP synthase activity"/>
    <property type="evidence" value="ECO:0007669"/>
    <property type="project" value="InterPro"/>
</dbReference>
<dbReference type="CDD" id="cd01742">
    <property type="entry name" value="GATase1_GMP_Synthase"/>
    <property type="match status" value="1"/>
</dbReference>
<dbReference type="CDD" id="cd01997">
    <property type="entry name" value="GMP_synthase_C"/>
    <property type="match status" value="1"/>
</dbReference>
<dbReference type="FunFam" id="3.30.300.10:FF:000002">
    <property type="entry name" value="GMP synthase [glutamine-hydrolyzing]"/>
    <property type="match status" value="1"/>
</dbReference>
<dbReference type="FunFam" id="3.40.50.620:FF:000001">
    <property type="entry name" value="GMP synthase [glutamine-hydrolyzing]"/>
    <property type="match status" value="1"/>
</dbReference>
<dbReference type="FunFam" id="3.40.50.880:FF:000001">
    <property type="entry name" value="GMP synthase [glutamine-hydrolyzing]"/>
    <property type="match status" value="1"/>
</dbReference>
<dbReference type="Gene3D" id="3.30.300.10">
    <property type="match status" value="1"/>
</dbReference>
<dbReference type="Gene3D" id="3.40.50.880">
    <property type="match status" value="1"/>
</dbReference>
<dbReference type="Gene3D" id="3.40.50.620">
    <property type="entry name" value="HUPs"/>
    <property type="match status" value="1"/>
</dbReference>
<dbReference type="HAMAP" id="MF_00344">
    <property type="entry name" value="GMP_synthase"/>
    <property type="match status" value="1"/>
</dbReference>
<dbReference type="InterPro" id="IPR029062">
    <property type="entry name" value="Class_I_gatase-like"/>
</dbReference>
<dbReference type="InterPro" id="IPR017926">
    <property type="entry name" value="GATASE"/>
</dbReference>
<dbReference type="InterPro" id="IPR001674">
    <property type="entry name" value="GMP_synth_C"/>
</dbReference>
<dbReference type="InterPro" id="IPR004739">
    <property type="entry name" value="GMP_synth_GATase"/>
</dbReference>
<dbReference type="InterPro" id="IPR022955">
    <property type="entry name" value="GMP_synthase"/>
</dbReference>
<dbReference type="InterPro" id="IPR025777">
    <property type="entry name" value="GMPS_ATP_PPase_dom"/>
</dbReference>
<dbReference type="InterPro" id="IPR022310">
    <property type="entry name" value="NAD/GMP_synthase"/>
</dbReference>
<dbReference type="InterPro" id="IPR014729">
    <property type="entry name" value="Rossmann-like_a/b/a_fold"/>
</dbReference>
<dbReference type="NCBIfam" id="TIGR00884">
    <property type="entry name" value="guaA_Cterm"/>
    <property type="match status" value="1"/>
</dbReference>
<dbReference type="NCBIfam" id="TIGR00888">
    <property type="entry name" value="guaA_Nterm"/>
    <property type="match status" value="1"/>
</dbReference>
<dbReference type="NCBIfam" id="NF000848">
    <property type="entry name" value="PRK00074.1"/>
    <property type="match status" value="1"/>
</dbReference>
<dbReference type="PANTHER" id="PTHR11922:SF2">
    <property type="entry name" value="GMP SYNTHASE [GLUTAMINE-HYDROLYZING]"/>
    <property type="match status" value="1"/>
</dbReference>
<dbReference type="PANTHER" id="PTHR11922">
    <property type="entry name" value="GMP SYNTHASE-RELATED"/>
    <property type="match status" value="1"/>
</dbReference>
<dbReference type="Pfam" id="PF00117">
    <property type="entry name" value="GATase"/>
    <property type="match status" value="1"/>
</dbReference>
<dbReference type="Pfam" id="PF00958">
    <property type="entry name" value="GMP_synt_C"/>
    <property type="match status" value="1"/>
</dbReference>
<dbReference type="Pfam" id="PF02540">
    <property type="entry name" value="NAD_synthase"/>
    <property type="match status" value="1"/>
</dbReference>
<dbReference type="SUPFAM" id="SSF52402">
    <property type="entry name" value="Adenine nucleotide alpha hydrolases-like"/>
    <property type="match status" value="1"/>
</dbReference>
<dbReference type="SUPFAM" id="SSF52317">
    <property type="entry name" value="Class I glutamine amidotransferase-like"/>
    <property type="match status" value="1"/>
</dbReference>
<dbReference type="SUPFAM" id="SSF54810">
    <property type="entry name" value="GMP synthetase C-terminal dimerisation domain"/>
    <property type="match status" value="1"/>
</dbReference>
<dbReference type="PROSITE" id="PS51273">
    <property type="entry name" value="GATASE_TYPE_1"/>
    <property type="match status" value="1"/>
</dbReference>
<dbReference type="PROSITE" id="PS51553">
    <property type="entry name" value="GMPS_ATP_PPASE"/>
    <property type="match status" value="1"/>
</dbReference>
<comment type="function">
    <text evidence="1">Catalyzes the synthesis of GMP from XMP.</text>
</comment>
<comment type="catalytic activity">
    <reaction evidence="1">
        <text>XMP + L-glutamine + ATP + H2O = GMP + L-glutamate + AMP + diphosphate + 2 H(+)</text>
        <dbReference type="Rhea" id="RHEA:11680"/>
        <dbReference type="ChEBI" id="CHEBI:15377"/>
        <dbReference type="ChEBI" id="CHEBI:15378"/>
        <dbReference type="ChEBI" id="CHEBI:29985"/>
        <dbReference type="ChEBI" id="CHEBI:30616"/>
        <dbReference type="ChEBI" id="CHEBI:33019"/>
        <dbReference type="ChEBI" id="CHEBI:57464"/>
        <dbReference type="ChEBI" id="CHEBI:58115"/>
        <dbReference type="ChEBI" id="CHEBI:58359"/>
        <dbReference type="ChEBI" id="CHEBI:456215"/>
        <dbReference type="EC" id="6.3.5.2"/>
    </reaction>
</comment>
<comment type="pathway">
    <text evidence="1">Purine metabolism; GMP biosynthesis; GMP from XMP (L-Gln route): step 1/1.</text>
</comment>
<comment type="subunit">
    <text evidence="1">Homodimer.</text>
</comment>
<name>GUAA_BURM7</name>
<protein>
    <recommendedName>
        <fullName evidence="1">GMP synthase [glutamine-hydrolyzing]</fullName>
        <ecNumber evidence="1">6.3.5.2</ecNumber>
    </recommendedName>
    <alternativeName>
        <fullName evidence="1">GMP synthetase</fullName>
    </alternativeName>
    <alternativeName>
        <fullName evidence="1">Glutamine amidotransferase</fullName>
    </alternativeName>
</protein>
<gene>
    <name evidence="1" type="primary">guaA</name>
    <name type="ordered locus">BMA10247_1292</name>
</gene>
<keyword id="KW-0067">ATP-binding</keyword>
<keyword id="KW-0315">Glutamine amidotransferase</keyword>
<keyword id="KW-0332">GMP biosynthesis</keyword>
<keyword id="KW-0436">Ligase</keyword>
<keyword id="KW-0547">Nucleotide-binding</keyword>
<keyword id="KW-0658">Purine biosynthesis</keyword>
<reference key="1">
    <citation type="journal article" date="2010" name="Genome Biol. Evol.">
        <title>Continuing evolution of Burkholderia mallei through genome reduction and large-scale rearrangements.</title>
        <authorList>
            <person name="Losada L."/>
            <person name="Ronning C.M."/>
            <person name="DeShazer D."/>
            <person name="Woods D."/>
            <person name="Fedorova N."/>
            <person name="Kim H.S."/>
            <person name="Shabalina S.A."/>
            <person name="Pearson T.R."/>
            <person name="Brinkac L."/>
            <person name="Tan P."/>
            <person name="Nandi T."/>
            <person name="Crabtree J."/>
            <person name="Badger J."/>
            <person name="Beckstrom-Sternberg S."/>
            <person name="Saqib M."/>
            <person name="Schutzer S.E."/>
            <person name="Keim P."/>
            <person name="Nierman W.C."/>
        </authorList>
    </citation>
    <scope>NUCLEOTIDE SEQUENCE [LARGE SCALE GENOMIC DNA]</scope>
    <source>
        <strain>NCTC 10247</strain>
    </source>
</reference>
<organism>
    <name type="scientific">Burkholderia mallei (strain NCTC 10247)</name>
    <dbReference type="NCBI Taxonomy" id="320389"/>
    <lineage>
        <taxon>Bacteria</taxon>
        <taxon>Pseudomonadati</taxon>
        <taxon>Pseudomonadota</taxon>
        <taxon>Betaproteobacteria</taxon>
        <taxon>Burkholderiales</taxon>
        <taxon>Burkholderiaceae</taxon>
        <taxon>Burkholderia</taxon>
        <taxon>pseudomallei group</taxon>
    </lineage>
</organism>
<proteinExistence type="inferred from homology"/>
<feature type="chain" id="PRO_1000120236" description="GMP synthase [glutamine-hydrolyzing]">
    <location>
        <begin position="1"/>
        <end position="539"/>
    </location>
</feature>
<feature type="domain" description="Glutamine amidotransferase type-1" evidence="1">
    <location>
        <begin position="4"/>
        <end position="202"/>
    </location>
</feature>
<feature type="domain" description="GMPS ATP-PPase" evidence="1">
    <location>
        <begin position="203"/>
        <end position="395"/>
    </location>
</feature>
<feature type="active site" description="Nucleophile" evidence="1">
    <location>
        <position position="81"/>
    </location>
</feature>
<feature type="active site" evidence="1">
    <location>
        <position position="176"/>
    </location>
</feature>
<feature type="active site" evidence="1">
    <location>
        <position position="178"/>
    </location>
</feature>
<feature type="binding site" evidence="1">
    <location>
        <begin position="230"/>
        <end position="236"/>
    </location>
    <ligand>
        <name>ATP</name>
        <dbReference type="ChEBI" id="CHEBI:30616"/>
    </ligand>
</feature>